<keyword id="KW-0067">ATP-binding</keyword>
<keyword id="KW-0963">Cytoplasm</keyword>
<keyword id="KW-0227">DNA damage</keyword>
<keyword id="KW-0233">DNA recombination</keyword>
<keyword id="KW-0234">DNA repair</keyword>
<keyword id="KW-0238">DNA-binding</keyword>
<keyword id="KW-0378">Hydrolase</keyword>
<keyword id="KW-0547">Nucleotide-binding</keyword>
<keyword id="KW-1185">Reference proteome</keyword>
<feature type="chain" id="PRO_0000165527" description="Holliday junction branch migration complex subunit RuvB">
    <location>
        <begin position="1"/>
        <end position="320"/>
    </location>
</feature>
<feature type="region of interest" description="Large ATPase domain (RuvB-L)" evidence="1">
    <location>
        <begin position="1"/>
        <end position="172"/>
    </location>
</feature>
<feature type="region of interest" description="Small ATPAse domain (RuvB-S)" evidence="1">
    <location>
        <begin position="173"/>
        <end position="243"/>
    </location>
</feature>
<feature type="region of interest" description="Head domain (RuvB-H)" evidence="1">
    <location>
        <begin position="246"/>
        <end position="320"/>
    </location>
</feature>
<feature type="binding site" evidence="1">
    <location>
        <position position="12"/>
    </location>
    <ligand>
        <name>ATP</name>
        <dbReference type="ChEBI" id="CHEBI:30616"/>
    </ligand>
</feature>
<feature type="binding site" evidence="1">
    <location>
        <position position="53"/>
    </location>
    <ligand>
        <name>ATP</name>
        <dbReference type="ChEBI" id="CHEBI:30616"/>
    </ligand>
</feature>
<feature type="binding site" evidence="1">
    <location>
        <position position="56"/>
    </location>
    <ligand>
        <name>ATP</name>
        <dbReference type="ChEBI" id="CHEBI:30616"/>
    </ligand>
</feature>
<feature type="binding site" evidence="1">
    <location>
        <position position="57"/>
    </location>
    <ligand>
        <name>ATP</name>
        <dbReference type="ChEBI" id="CHEBI:30616"/>
    </ligand>
</feature>
<feature type="binding site" evidence="1">
    <location>
        <position position="57"/>
    </location>
    <ligand>
        <name>Mg(2+)</name>
        <dbReference type="ChEBI" id="CHEBI:18420"/>
    </ligand>
</feature>
<feature type="binding site" evidence="1">
    <location>
        <position position="58"/>
    </location>
    <ligand>
        <name>ATP</name>
        <dbReference type="ChEBI" id="CHEBI:30616"/>
    </ligand>
</feature>
<feature type="binding site" evidence="1">
    <location>
        <begin position="119"/>
        <end position="121"/>
    </location>
    <ligand>
        <name>ATP</name>
        <dbReference type="ChEBI" id="CHEBI:30616"/>
    </ligand>
</feature>
<feature type="binding site" evidence="1">
    <location>
        <position position="162"/>
    </location>
    <ligand>
        <name>ATP</name>
        <dbReference type="ChEBI" id="CHEBI:30616"/>
    </ligand>
</feature>
<feature type="binding site" evidence="1">
    <location>
        <position position="172"/>
    </location>
    <ligand>
        <name>ATP</name>
        <dbReference type="ChEBI" id="CHEBI:30616"/>
    </ligand>
</feature>
<feature type="binding site" evidence="1">
    <location>
        <position position="209"/>
    </location>
    <ligand>
        <name>ATP</name>
        <dbReference type="ChEBI" id="CHEBI:30616"/>
    </ligand>
</feature>
<feature type="binding site" evidence="1">
    <location>
        <position position="301"/>
    </location>
    <ligand>
        <name>DNA</name>
        <dbReference type="ChEBI" id="CHEBI:16991"/>
    </ligand>
</feature>
<feature type="binding site" evidence="1">
    <location>
        <position position="306"/>
    </location>
    <ligand>
        <name>DNA</name>
        <dbReference type="ChEBI" id="CHEBI:16991"/>
    </ligand>
</feature>
<organism>
    <name type="scientific">Nitratidesulfovibrio vulgaris (strain ATCC 29579 / DSM 644 / CCUG 34227 / NCIMB 8303 / VKM B-1760 / Hildenborough)</name>
    <name type="common">Desulfovibrio vulgaris</name>
    <dbReference type="NCBI Taxonomy" id="882"/>
    <lineage>
        <taxon>Bacteria</taxon>
        <taxon>Pseudomonadati</taxon>
        <taxon>Thermodesulfobacteriota</taxon>
        <taxon>Desulfovibrionia</taxon>
        <taxon>Desulfovibrionales</taxon>
        <taxon>Desulfovibrionaceae</taxon>
        <taxon>Nitratidesulfovibrio</taxon>
    </lineage>
</organism>
<gene>
    <name evidence="1" type="primary">ruvB</name>
    <name type="ordered locus">DVU_2255</name>
</gene>
<protein>
    <recommendedName>
        <fullName evidence="1">Holliday junction branch migration complex subunit RuvB</fullName>
        <ecNumber evidence="1">3.6.4.-</ecNumber>
    </recommendedName>
</protein>
<sequence length="320" mass="35085">MTANVCLDESVRPRLLDDFIGQDELRANMRVYLDAARERGQAMDHVLFYGNPGLGKTTLAQIMAGELGVNLVSTSGPVLERSGDLAAILTNLGRHDLLFVDEIHRMPIAVEEVLYPAMEDFKLDLVIGQGPGARTVKIDVEPFTLVGATTRIGLLSSPLRDRFGIISRLEYYTPADLARIVARTARIIGANLTEEGAIEIGRRARGTPRIANRLLRRVRDFATVHAGGVISADLASEALGRMEVDESGLDQMDRKLLEVLIEHYGGGPVGIKTLAVACAEEVRTIEDIYEPYLIQCGFLKRTPRGRVATAKAYRHLNLLG</sequence>
<evidence type="ECO:0000255" key="1">
    <source>
        <dbReference type="HAMAP-Rule" id="MF_00016"/>
    </source>
</evidence>
<name>RUVB_NITV2</name>
<comment type="function">
    <text evidence="1">The RuvA-RuvB-RuvC complex processes Holliday junction (HJ) DNA during genetic recombination and DNA repair, while the RuvA-RuvB complex plays an important role in the rescue of blocked DNA replication forks via replication fork reversal (RFR). RuvA specifically binds to HJ cruciform DNA, conferring on it an open structure. The RuvB hexamer acts as an ATP-dependent pump, pulling dsDNA into and through the RuvAB complex. RuvB forms 2 homohexamers on either side of HJ DNA bound by 1 or 2 RuvA tetramers; 4 subunits per hexamer contact DNA at a time. Coordinated motions by a converter formed by DNA-disengaged RuvB subunits stimulates ATP hydrolysis and nucleotide exchange. Immobilization of the converter enables RuvB to convert the ATP-contained energy into a lever motion, pulling 2 nucleotides of DNA out of the RuvA tetramer per ATP hydrolyzed, thus driving DNA branch migration. The RuvB motors rotate together with the DNA substrate, which together with the progressing nucleotide cycle form the mechanistic basis for DNA recombination by continuous HJ branch migration. Branch migration allows RuvC to scan DNA until it finds its consensus sequence, where it cleaves and resolves cruciform DNA.</text>
</comment>
<comment type="catalytic activity">
    <reaction evidence="1">
        <text>ATP + H2O = ADP + phosphate + H(+)</text>
        <dbReference type="Rhea" id="RHEA:13065"/>
        <dbReference type="ChEBI" id="CHEBI:15377"/>
        <dbReference type="ChEBI" id="CHEBI:15378"/>
        <dbReference type="ChEBI" id="CHEBI:30616"/>
        <dbReference type="ChEBI" id="CHEBI:43474"/>
        <dbReference type="ChEBI" id="CHEBI:456216"/>
    </reaction>
</comment>
<comment type="subunit">
    <text evidence="1">Homohexamer. Forms an RuvA(8)-RuvB(12)-Holliday junction (HJ) complex. HJ DNA is sandwiched between 2 RuvA tetramers; dsDNA enters through RuvA and exits via RuvB. An RuvB hexamer assembles on each DNA strand where it exits the tetramer. Each RuvB hexamer is contacted by two RuvA subunits (via domain III) on 2 adjacent RuvB subunits; this complex drives branch migration. In the full resolvosome a probable DNA-RuvA(4)-RuvB(12)-RuvC(2) complex forms which resolves the HJ.</text>
</comment>
<comment type="subcellular location">
    <subcellularLocation>
        <location evidence="1">Cytoplasm</location>
    </subcellularLocation>
</comment>
<comment type="domain">
    <text evidence="1">Has 3 domains, the large (RuvB-L) and small ATPase (RuvB-S) domains and the C-terminal head (RuvB-H) domain. The head domain binds DNA, while the ATPase domains jointly bind ATP, ADP or are empty depending on the state of the subunit in the translocation cycle. During a single DNA translocation step the structure of each domain remains the same, but their relative positions change.</text>
</comment>
<comment type="similarity">
    <text evidence="1">Belongs to the RuvB family.</text>
</comment>
<proteinExistence type="inferred from homology"/>
<accession>P61531</accession>
<reference key="1">
    <citation type="journal article" date="2004" name="Nat. Biotechnol.">
        <title>The genome sequence of the anaerobic, sulfate-reducing bacterium Desulfovibrio vulgaris Hildenborough.</title>
        <authorList>
            <person name="Heidelberg J.F."/>
            <person name="Seshadri R."/>
            <person name="Haveman S.A."/>
            <person name="Hemme C.L."/>
            <person name="Paulsen I.T."/>
            <person name="Kolonay J.F."/>
            <person name="Eisen J.A."/>
            <person name="Ward N.L."/>
            <person name="Methe B.A."/>
            <person name="Brinkac L.M."/>
            <person name="Daugherty S.C."/>
            <person name="DeBoy R.T."/>
            <person name="Dodson R.J."/>
            <person name="Durkin A.S."/>
            <person name="Madupu R."/>
            <person name="Nelson W.C."/>
            <person name="Sullivan S.A."/>
            <person name="Fouts D.E."/>
            <person name="Haft D.H."/>
            <person name="Selengut J."/>
            <person name="Peterson J.D."/>
            <person name="Davidsen T.M."/>
            <person name="Zafar N."/>
            <person name="Zhou L."/>
            <person name="Radune D."/>
            <person name="Dimitrov G."/>
            <person name="Hance M."/>
            <person name="Tran K."/>
            <person name="Khouri H.M."/>
            <person name="Gill J."/>
            <person name="Utterback T.R."/>
            <person name="Feldblyum T.V."/>
            <person name="Wall J.D."/>
            <person name="Voordouw G."/>
            <person name="Fraser C.M."/>
        </authorList>
    </citation>
    <scope>NUCLEOTIDE SEQUENCE [LARGE SCALE GENOMIC DNA]</scope>
    <source>
        <strain>ATCC 29579 / DSM 644 / CCUG 34227 / NCIMB 8303 / VKM B-1760 / Hildenborough</strain>
    </source>
</reference>
<dbReference type="EC" id="3.6.4.-" evidence="1"/>
<dbReference type="EMBL" id="AE017285">
    <property type="protein sequence ID" value="AAS96728.1"/>
    <property type="molecule type" value="Genomic_DNA"/>
</dbReference>
<dbReference type="RefSeq" id="WP_010939530.1">
    <property type="nucleotide sequence ID" value="NC_002937.3"/>
</dbReference>
<dbReference type="RefSeq" id="YP_011468.1">
    <property type="nucleotide sequence ID" value="NC_002937.3"/>
</dbReference>
<dbReference type="SMR" id="P61531"/>
<dbReference type="IntAct" id="P61531">
    <property type="interactions" value="1"/>
</dbReference>
<dbReference type="STRING" id="882.DVU_2255"/>
<dbReference type="PaxDb" id="882-DVU_2255"/>
<dbReference type="EnsemblBacteria" id="AAS96728">
    <property type="protein sequence ID" value="AAS96728"/>
    <property type="gene ID" value="DVU_2255"/>
</dbReference>
<dbReference type="KEGG" id="dvu:DVU_2255"/>
<dbReference type="PATRIC" id="fig|882.5.peg.2049"/>
<dbReference type="eggNOG" id="COG2255">
    <property type="taxonomic scope" value="Bacteria"/>
</dbReference>
<dbReference type="HOGENOM" id="CLU_055599_1_0_7"/>
<dbReference type="OrthoDB" id="9804478at2"/>
<dbReference type="PhylomeDB" id="P61531"/>
<dbReference type="Proteomes" id="UP000002194">
    <property type="component" value="Chromosome"/>
</dbReference>
<dbReference type="GO" id="GO:0005737">
    <property type="term" value="C:cytoplasm"/>
    <property type="evidence" value="ECO:0007669"/>
    <property type="project" value="UniProtKB-SubCell"/>
</dbReference>
<dbReference type="GO" id="GO:0048476">
    <property type="term" value="C:Holliday junction resolvase complex"/>
    <property type="evidence" value="ECO:0007669"/>
    <property type="project" value="UniProtKB-UniRule"/>
</dbReference>
<dbReference type="GO" id="GO:0005524">
    <property type="term" value="F:ATP binding"/>
    <property type="evidence" value="ECO:0007669"/>
    <property type="project" value="UniProtKB-UniRule"/>
</dbReference>
<dbReference type="GO" id="GO:0016887">
    <property type="term" value="F:ATP hydrolysis activity"/>
    <property type="evidence" value="ECO:0007669"/>
    <property type="project" value="InterPro"/>
</dbReference>
<dbReference type="GO" id="GO:0000400">
    <property type="term" value="F:four-way junction DNA binding"/>
    <property type="evidence" value="ECO:0007669"/>
    <property type="project" value="UniProtKB-UniRule"/>
</dbReference>
<dbReference type="GO" id="GO:0009378">
    <property type="term" value="F:four-way junction helicase activity"/>
    <property type="evidence" value="ECO:0007669"/>
    <property type="project" value="InterPro"/>
</dbReference>
<dbReference type="GO" id="GO:0006310">
    <property type="term" value="P:DNA recombination"/>
    <property type="evidence" value="ECO:0007669"/>
    <property type="project" value="UniProtKB-UniRule"/>
</dbReference>
<dbReference type="GO" id="GO:0006281">
    <property type="term" value="P:DNA repair"/>
    <property type="evidence" value="ECO:0007669"/>
    <property type="project" value="UniProtKB-UniRule"/>
</dbReference>
<dbReference type="CDD" id="cd00009">
    <property type="entry name" value="AAA"/>
    <property type="match status" value="1"/>
</dbReference>
<dbReference type="Gene3D" id="1.10.8.60">
    <property type="match status" value="1"/>
</dbReference>
<dbReference type="Gene3D" id="3.40.50.300">
    <property type="entry name" value="P-loop containing nucleotide triphosphate hydrolases"/>
    <property type="match status" value="1"/>
</dbReference>
<dbReference type="Gene3D" id="1.10.10.10">
    <property type="entry name" value="Winged helix-like DNA-binding domain superfamily/Winged helix DNA-binding domain"/>
    <property type="match status" value="1"/>
</dbReference>
<dbReference type="HAMAP" id="MF_00016">
    <property type="entry name" value="DNA_HJ_migration_RuvB"/>
    <property type="match status" value="1"/>
</dbReference>
<dbReference type="InterPro" id="IPR003593">
    <property type="entry name" value="AAA+_ATPase"/>
</dbReference>
<dbReference type="InterPro" id="IPR041445">
    <property type="entry name" value="AAA_lid_4"/>
</dbReference>
<dbReference type="InterPro" id="IPR004605">
    <property type="entry name" value="DNA_helicase_Holl-junc_RuvB"/>
</dbReference>
<dbReference type="InterPro" id="IPR027417">
    <property type="entry name" value="P-loop_NTPase"/>
</dbReference>
<dbReference type="InterPro" id="IPR008824">
    <property type="entry name" value="RuvB-like_N"/>
</dbReference>
<dbReference type="InterPro" id="IPR008823">
    <property type="entry name" value="RuvB_C"/>
</dbReference>
<dbReference type="InterPro" id="IPR036388">
    <property type="entry name" value="WH-like_DNA-bd_sf"/>
</dbReference>
<dbReference type="InterPro" id="IPR036390">
    <property type="entry name" value="WH_DNA-bd_sf"/>
</dbReference>
<dbReference type="NCBIfam" id="NF000868">
    <property type="entry name" value="PRK00080.1"/>
    <property type="match status" value="1"/>
</dbReference>
<dbReference type="NCBIfam" id="TIGR00635">
    <property type="entry name" value="ruvB"/>
    <property type="match status" value="1"/>
</dbReference>
<dbReference type="PANTHER" id="PTHR42848">
    <property type="match status" value="1"/>
</dbReference>
<dbReference type="PANTHER" id="PTHR42848:SF1">
    <property type="entry name" value="HOLLIDAY JUNCTION BRANCH MIGRATION COMPLEX SUBUNIT RUVB"/>
    <property type="match status" value="1"/>
</dbReference>
<dbReference type="Pfam" id="PF17864">
    <property type="entry name" value="AAA_lid_4"/>
    <property type="match status" value="1"/>
</dbReference>
<dbReference type="Pfam" id="PF05491">
    <property type="entry name" value="RuvB_C"/>
    <property type="match status" value="1"/>
</dbReference>
<dbReference type="Pfam" id="PF05496">
    <property type="entry name" value="RuvB_N"/>
    <property type="match status" value="1"/>
</dbReference>
<dbReference type="SMART" id="SM00382">
    <property type="entry name" value="AAA"/>
    <property type="match status" value="1"/>
</dbReference>
<dbReference type="SUPFAM" id="SSF52540">
    <property type="entry name" value="P-loop containing nucleoside triphosphate hydrolases"/>
    <property type="match status" value="1"/>
</dbReference>
<dbReference type="SUPFAM" id="SSF46785">
    <property type="entry name" value="Winged helix' DNA-binding domain"/>
    <property type="match status" value="1"/>
</dbReference>